<comment type="function">
    <text evidence="1">Binds to DNA and alters its conformation. May be involved in regulation of gene expression, nucleoid organization and DNA protection.</text>
</comment>
<comment type="subunit">
    <text evidence="1">Homodimer.</text>
</comment>
<comment type="subcellular location">
    <subcellularLocation>
        <location evidence="1">Cytoplasm</location>
        <location evidence="1">Nucleoid</location>
    </subcellularLocation>
</comment>
<comment type="similarity">
    <text evidence="1">Belongs to the YbaB/EbfC family.</text>
</comment>
<accession>Q1BGY8</accession>
<gene>
    <name type="ordered locus">Bcen_6253</name>
</gene>
<proteinExistence type="inferred from homology"/>
<dbReference type="EMBL" id="CP000380">
    <property type="protein sequence ID" value="ABF81117.1"/>
    <property type="molecule type" value="Genomic_DNA"/>
</dbReference>
<dbReference type="SMR" id="Q1BGY8"/>
<dbReference type="HOGENOM" id="CLU_140930_0_0_4"/>
<dbReference type="GO" id="GO:0043590">
    <property type="term" value="C:bacterial nucleoid"/>
    <property type="evidence" value="ECO:0007669"/>
    <property type="project" value="UniProtKB-UniRule"/>
</dbReference>
<dbReference type="GO" id="GO:0005829">
    <property type="term" value="C:cytosol"/>
    <property type="evidence" value="ECO:0007669"/>
    <property type="project" value="TreeGrafter"/>
</dbReference>
<dbReference type="GO" id="GO:0003677">
    <property type="term" value="F:DNA binding"/>
    <property type="evidence" value="ECO:0007669"/>
    <property type="project" value="UniProtKB-UniRule"/>
</dbReference>
<dbReference type="FunFam" id="3.30.1310.10:FF:000001">
    <property type="entry name" value="Nucleoid-associated protein YbaB"/>
    <property type="match status" value="1"/>
</dbReference>
<dbReference type="Gene3D" id="3.30.1310.10">
    <property type="entry name" value="Nucleoid-associated protein YbaB-like domain"/>
    <property type="match status" value="1"/>
</dbReference>
<dbReference type="HAMAP" id="MF_00274">
    <property type="entry name" value="DNA_YbaB_EbfC"/>
    <property type="match status" value="1"/>
</dbReference>
<dbReference type="InterPro" id="IPR036894">
    <property type="entry name" value="YbaB-like_sf"/>
</dbReference>
<dbReference type="InterPro" id="IPR004401">
    <property type="entry name" value="YbaB/EbfC"/>
</dbReference>
<dbReference type="NCBIfam" id="TIGR00103">
    <property type="entry name" value="DNA_YbaB_EbfC"/>
    <property type="match status" value="1"/>
</dbReference>
<dbReference type="PANTHER" id="PTHR33449">
    <property type="entry name" value="NUCLEOID-ASSOCIATED PROTEIN YBAB"/>
    <property type="match status" value="1"/>
</dbReference>
<dbReference type="PANTHER" id="PTHR33449:SF1">
    <property type="entry name" value="NUCLEOID-ASSOCIATED PROTEIN YBAB"/>
    <property type="match status" value="1"/>
</dbReference>
<dbReference type="Pfam" id="PF02575">
    <property type="entry name" value="YbaB_DNA_bd"/>
    <property type="match status" value="1"/>
</dbReference>
<dbReference type="PIRSF" id="PIRSF004555">
    <property type="entry name" value="UCP004555"/>
    <property type="match status" value="1"/>
</dbReference>
<dbReference type="SUPFAM" id="SSF82607">
    <property type="entry name" value="YbaB-like"/>
    <property type="match status" value="1"/>
</dbReference>
<name>Y6253_BURO1</name>
<sequence length="108" mass="11769">MLKGNLAGLMKQAQQMQENMKKMQEQLALIEVEGQSGAGLVKVTMTCRNEVRRVSIDPSLLADDKDMLEDLVAAAFNDAVRKAEATSQEKMSGMTSGLPLPPGFKLPF</sequence>
<reference key="1">
    <citation type="submission" date="2006-05" db="EMBL/GenBank/DDBJ databases">
        <title>Complete sequence of chromosome 3 of Burkholderia cenocepacia AU 1054.</title>
        <authorList>
            <consortium name="US DOE Joint Genome Institute"/>
            <person name="Copeland A."/>
            <person name="Lucas S."/>
            <person name="Lapidus A."/>
            <person name="Barry K."/>
            <person name="Detter J.C."/>
            <person name="Glavina del Rio T."/>
            <person name="Hammon N."/>
            <person name="Israni S."/>
            <person name="Dalin E."/>
            <person name="Tice H."/>
            <person name="Pitluck S."/>
            <person name="Chain P."/>
            <person name="Malfatti S."/>
            <person name="Shin M."/>
            <person name="Vergez L."/>
            <person name="Schmutz J."/>
            <person name="Larimer F."/>
            <person name="Land M."/>
            <person name="Hauser L."/>
            <person name="Kyrpides N."/>
            <person name="Lykidis A."/>
            <person name="LiPuma J.J."/>
            <person name="Konstantinidis K."/>
            <person name="Tiedje J.M."/>
            <person name="Richardson P."/>
        </authorList>
    </citation>
    <scope>NUCLEOTIDE SEQUENCE [LARGE SCALE GENOMIC DNA]</scope>
    <source>
        <strain>AU 1054</strain>
    </source>
</reference>
<evidence type="ECO:0000255" key="1">
    <source>
        <dbReference type="HAMAP-Rule" id="MF_00274"/>
    </source>
</evidence>
<evidence type="ECO:0000256" key="2">
    <source>
        <dbReference type="SAM" id="MobiDB-lite"/>
    </source>
</evidence>
<organism>
    <name type="scientific">Burkholderia orbicola (strain AU 1054)</name>
    <dbReference type="NCBI Taxonomy" id="331271"/>
    <lineage>
        <taxon>Bacteria</taxon>
        <taxon>Pseudomonadati</taxon>
        <taxon>Pseudomonadota</taxon>
        <taxon>Betaproteobacteria</taxon>
        <taxon>Burkholderiales</taxon>
        <taxon>Burkholderiaceae</taxon>
        <taxon>Burkholderia</taxon>
        <taxon>Burkholderia cepacia complex</taxon>
        <taxon>Burkholderia orbicola</taxon>
    </lineage>
</organism>
<protein>
    <recommendedName>
        <fullName evidence="1">Nucleoid-associated protein Bcen_6253</fullName>
    </recommendedName>
</protein>
<feature type="chain" id="PRO_1000003699" description="Nucleoid-associated protein Bcen_6253">
    <location>
        <begin position="1"/>
        <end position="108"/>
    </location>
</feature>
<feature type="region of interest" description="Disordered" evidence="2">
    <location>
        <begin position="85"/>
        <end position="108"/>
    </location>
</feature>
<feature type="compositionally biased region" description="Polar residues" evidence="2">
    <location>
        <begin position="85"/>
        <end position="95"/>
    </location>
</feature>
<feature type="compositionally biased region" description="Pro residues" evidence="2">
    <location>
        <begin position="99"/>
        <end position="108"/>
    </location>
</feature>
<keyword id="KW-0963">Cytoplasm</keyword>
<keyword id="KW-0238">DNA-binding</keyword>